<organism>
    <name type="scientific">Encephalitozoon cuniculi (strain GB-M1)</name>
    <name type="common">Microsporidian parasite</name>
    <dbReference type="NCBI Taxonomy" id="284813"/>
    <lineage>
        <taxon>Eukaryota</taxon>
        <taxon>Fungi</taxon>
        <taxon>Fungi incertae sedis</taxon>
        <taxon>Microsporidia</taxon>
        <taxon>Unikaryonidae</taxon>
        <taxon>Encephalitozoon</taxon>
    </lineage>
</organism>
<gene>
    <name type="primary">GSP1</name>
    <name type="ordered locus">ECU04_1560</name>
</gene>
<comment type="function">
    <text evidence="1">GTP-binding protein involved in nucleocytoplasmic transport. Required for the import of protein into the nucleus and also for RNA export (By similarity).</text>
</comment>
<comment type="subunit">
    <text evidence="2">Found in a nuclear export complex with RanGTP, exportin and pre-miRNA (By similarity).</text>
</comment>
<comment type="subcellular location">
    <subcellularLocation>
        <location evidence="1">Nucleus</location>
    </subcellularLocation>
</comment>
<comment type="developmental stage">
    <text evidence="4">Expressed in late sporogonial stages.</text>
</comment>
<comment type="similarity">
    <text evidence="3 5">Belongs to the small GTPase superfamily. Ran family.</text>
</comment>
<name>GSP1_ENCCU</name>
<feature type="chain" id="PRO_0000382910" description="GTP-binding nuclear protein GSP1">
    <location>
        <begin position="1"/>
        <end position="214"/>
    </location>
</feature>
<feature type="domain" description="Small GTPase Ran-type" evidence="3">
    <location>
        <begin position="4"/>
        <end position="172"/>
    </location>
</feature>
<feature type="region of interest" description="Switch-I" evidence="3">
    <location>
        <begin position="34"/>
        <end position="42"/>
    </location>
</feature>
<feature type="region of interest" description="Switch-II" evidence="3">
    <location>
        <begin position="66"/>
        <end position="82"/>
    </location>
</feature>
<feature type="binding site" evidence="6">
    <location>
        <begin position="17"/>
        <end position="22"/>
    </location>
    <ligand>
        <name>GTP</name>
        <dbReference type="ChEBI" id="CHEBI:37565"/>
    </ligand>
</feature>
<feature type="binding site" evidence="2">
    <location>
        <position position="66"/>
    </location>
    <ligand>
        <name>GTP</name>
        <dbReference type="ChEBI" id="CHEBI:37565"/>
    </ligand>
</feature>
<feature type="binding site" evidence="6">
    <location>
        <begin position="121"/>
        <end position="124"/>
    </location>
    <ligand>
        <name>GTP</name>
        <dbReference type="ChEBI" id="CHEBI:37565"/>
    </ligand>
</feature>
<feature type="binding site" evidence="6">
    <location>
        <begin position="151"/>
        <end position="153"/>
    </location>
    <ligand>
        <name>GTP</name>
        <dbReference type="ChEBI" id="CHEBI:37565"/>
    </ligand>
</feature>
<feature type="strand" evidence="7">
    <location>
        <begin position="7"/>
        <end position="13"/>
    </location>
</feature>
<feature type="helix" evidence="7">
    <location>
        <begin position="20"/>
        <end position="24"/>
    </location>
</feature>
<feature type="strand" evidence="7">
    <location>
        <begin position="35"/>
        <end position="37"/>
    </location>
</feature>
<feature type="turn" evidence="7">
    <location>
        <begin position="38"/>
        <end position="41"/>
    </location>
</feature>
<feature type="strand" evidence="7">
    <location>
        <begin position="42"/>
        <end position="51"/>
    </location>
</feature>
<feature type="strand" evidence="7">
    <location>
        <begin position="56"/>
        <end position="64"/>
    </location>
</feature>
<feature type="helix" evidence="7">
    <location>
        <begin position="67"/>
        <end position="69"/>
    </location>
</feature>
<feature type="helix" evidence="7">
    <location>
        <begin position="75"/>
        <end position="78"/>
    </location>
</feature>
<feature type="strand" evidence="7">
    <location>
        <begin position="82"/>
        <end position="89"/>
    </location>
</feature>
<feature type="helix" evidence="7">
    <location>
        <begin position="93"/>
        <end position="97"/>
    </location>
</feature>
<feature type="helix" evidence="7">
    <location>
        <begin position="99"/>
        <end position="110"/>
    </location>
</feature>
<feature type="strand" evidence="7">
    <location>
        <begin position="112"/>
        <end position="114"/>
    </location>
</feature>
<feature type="strand" evidence="7">
    <location>
        <begin position="116"/>
        <end position="121"/>
    </location>
</feature>
<feature type="helix" evidence="7">
    <location>
        <begin position="133"/>
        <end position="139"/>
    </location>
</feature>
<feature type="turn" evidence="7">
    <location>
        <begin position="140"/>
        <end position="142"/>
    </location>
</feature>
<feature type="strand" evidence="7">
    <location>
        <begin position="146"/>
        <end position="151"/>
    </location>
</feature>
<feature type="turn" evidence="7">
    <location>
        <begin position="152"/>
        <end position="155"/>
    </location>
</feature>
<feature type="turn" evidence="7">
    <location>
        <begin position="157"/>
        <end position="159"/>
    </location>
</feature>
<feature type="helix" evidence="7">
    <location>
        <begin position="160"/>
        <end position="170"/>
    </location>
</feature>
<feature type="turn" evidence="7">
    <location>
        <begin position="201"/>
        <end position="204"/>
    </location>
</feature>
<keyword id="KW-0002">3D-structure</keyword>
<keyword id="KW-0342">GTP-binding</keyword>
<keyword id="KW-0547">Nucleotide-binding</keyword>
<keyword id="KW-0539">Nucleus</keyword>
<keyword id="KW-0653">Protein transport</keyword>
<keyword id="KW-1185">Reference proteome</keyword>
<keyword id="KW-0813">Transport</keyword>
<sequence length="214" mass="24364">MERRELTYKICLIGDGGVGKTTYINRVLDGRFEKNYNATVGAVNHPVTFLDDQGNVIKFNVWDTAGQEKKAVLKDVYYIGASGAIFFFDVTSRITCQNLARWVKEFQAVVGNEAPIVVCANKIDIKNRQKISKKLVMEVLKGKNYEYFEISAKTAHNFGLPFLHLARIFTGRPDLIFVSNVNLEPTEVNYDYHSPEESKYIDYMEQASKMAPEE</sequence>
<dbReference type="EMBL" id="AL590444">
    <property type="protein sequence ID" value="CAD25345.1"/>
    <property type="molecule type" value="Genomic_DNA"/>
</dbReference>
<dbReference type="RefSeq" id="NP_584841.1">
    <property type="nucleotide sequence ID" value="NM_001041191.1"/>
</dbReference>
<dbReference type="PDB" id="4DJT">
    <property type="method" value="X-ray"/>
    <property type="resolution" value="1.80 A"/>
    <property type="chains" value="A/B=1-214"/>
</dbReference>
<dbReference type="PDBsum" id="4DJT"/>
<dbReference type="SMR" id="Q8SS11"/>
<dbReference type="FunCoup" id="Q8SS11">
    <property type="interactions" value="391"/>
</dbReference>
<dbReference type="STRING" id="284813.Q8SS11"/>
<dbReference type="GeneID" id="858989"/>
<dbReference type="KEGG" id="ecu:ECU04_1560"/>
<dbReference type="VEuPathDB" id="MicrosporidiaDB:ECU04_1560"/>
<dbReference type="HOGENOM" id="CLU_041217_10_6_1"/>
<dbReference type="InParanoid" id="Q8SS11"/>
<dbReference type="OMA" id="NACGVEN"/>
<dbReference type="OrthoDB" id="48625at2759"/>
<dbReference type="EvolutionaryTrace" id="Q8SS11"/>
<dbReference type="Proteomes" id="UP000000819">
    <property type="component" value="Chromosome IV"/>
</dbReference>
<dbReference type="GO" id="GO:0005737">
    <property type="term" value="C:cytoplasm"/>
    <property type="evidence" value="ECO:0007669"/>
    <property type="project" value="TreeGrafter"/>
</dbReference>
<dbReference type="GO" id="GO:0005634">
    <property type="term" value="C:nucleus"/>
    <property type="evidence" value="ECO:0007669"/>
    <property type="project" value="UniProtKB-SubCell"/>
</dbReference>
<dbReference type="GO" id="GO:0005525">
    <property type="term" value="F:GTP binding"/>
    <property type="evidence" value="ECO:0007669"/>
    <property type="project" value="UniProtKB-KW"/>
</dbReference>
<dbReference type="GO" id="GO:0003924">
    <property type="term" value="F:GTPase activity"/>
    <property type="evidence" value="ECO:0007669"/>
    <property type="project" value="InterPro"/>
</dbReference>
<dbReference type="GO" id="GO:0006606">
    <property type="term" value="P:protein import into nucleus"/>
    <property type="evidence" value="ECO:0007669"/>
    <property type="project" value="TreeGrafter"/>
</dbReference>
<dbReference type="GO" id="GO:0000054">
    <property type="term" value="P:ribosomal subunit export from nucleus"/>
    <property type="evidence" value="ECO:0007669"/>
    <property type="project" value="TreeGrafter"/>
</dbReference>
<dbReference type="CDD" id="cd00877">
    <property type="entry name" value="Ran"/>
    <property type="match status" value="1"/>
</dbReference>
<dbReference type="FunFam" id="3.40.50.300:FF:001447">
    <property type="entry name" value="Ras-related protein Rab-1B"/>
    <property type="match status" value="1"/>
</dbReference>
<dbReference type="Gene3D" id="3.40.50.300">
    <property type="entry name" value="P-loop containing nucleotide triphosphate hydrolases"/>
    <property type="match status" value="1"/>
</dbReference>
<dbReference type="InterPro" id="IPR027417">
    <property type="entry name" value="P-loop_NTPase"/>
</dbReference>
<dbReference type="InterPro" id="IPR002041">
    <property type="entry name" value="Ran_GTPase"/>
</dbReference>
<dbReference type="InterPro" id="IPR005225">
    <property type="entry name" value="Small_GTP-bd"/>
</dbReference>
<dbReference type="InterPro" id="IPR001806">
    <property type="entry name" value="Small_GTPase"/>
</dbReference>
<dbReference type="NCBIfam" id="TIGR00231">
    <property type="entry name" value="small_GTP"/>
    <property type="match status" value="1"/>
</dbReference>
<dbReference type="PANTHER" id="PTHR24071:SF0">
    <property type="entry name" value="GTP-BINDING NUCLEAR PROTEIN RAN"/>
    <property type="match status" value="1"/>
</dbReference>
<dbReference type="PANTHER" id="PTHR24071">
    <property type="entry name" value="RAN GTPASE"/>
    <property type="match status" value="1"/>
</dbReference>
<dbReference type="Pfam" id="PF00071">
    <property type="entry name" value="Ras"/>
    <property type="match status" value="1"/>
</dbReference>
<dbReference type="PRINTS" id="PR00449">
    <property type="entry name" value="RASTRNSFRMNG"/>
</dbReference>
<dbReference type="SMART" id="SM00175">
    <property type="entry name" value="RAB"/>
    <property type="match status" value="1"/>
</dbReference>
<dbReference type="SMART" id="SM00176">
    <property type="entry name" value="RAN"/>
    <property type="match status" value="1"/>
</dbReference>
<dbReference type="SMART" id="SM00173">
    <property type="entry name" value="RAS"/>
    <property type="match status" value="1"/>
</dbReference>
<dbReference type="SMART" id="SM00174">
    <property type="entry name" value="RHO"/>
    <property type="match status" value="1"/>
</dbReference>
<dbReference type="SUPFAM" id="SSF52540">
    <property type="entry name" value="P-loop containing nucleoside triphosphate hydrolases"/>
    <property type="match status" value="1"/>
</dbReference>
<dbReference type="PROSITE" id="PS51418">
    <property type="entry name" value="RAN"/>
    <property type="match status" value="1"/>
</dbReference>
<protein>
    <recommendedName>
        <fullName>GTP-binding nuclear protein GSP1</fullName>
    </recommendedName>
    <alternativeName>
        <fullName>GTPase Ran homolog</fullName>
    </alternativeName>
</protein>
<accession>Q8SS11</accession>
<proteinExistence type="evidence at protein level"/>
<evidence type="ECO:0000250" key="1"/>
<evidence type="ECO:0000250" key="2">
    <source>
        <dbReference type="UniProtKB" id="P62825"/>
    </source>
</evidence>
<evidence type="ECO:0000255" key="3">
    <source>
        <dbReference type="PROSITE-ProRule" id="PRU00752"/>
    </source>
</evidence>
<evidence type="ECO:0000269" key="4">
    <source>
    </source>
</evidence>
<evidence type="ECO:0000305" key="5"/>
<evidence type="ECO:0007744" key="6">
    <source>
        <dbReference type="PDB" id="4DJT"/>
    </source>
</evidence>
<evidence type="ECO:0007829" key="7">
    <source>
        <dbReference type="PDB" id="4DJT"/>
    </source>
</evidence>
<reference key="1">
    <citation type="journal article" date="2001" name="Nature">
        <title>Genome sequence and gene compaction of the eukaryote parasite Encephalitozoon cuniculi.</title>
        <authorList>
            <person name="Katinka M.D."/>
            <person name="Duprat S."/>
            <person name="Cornillot E."/>
            <person name="Metenier G."/>
            <person name="Thomarat F."/>
            <person name="Prensier G."/>
            <person name="Barbe V."/>
            <person name="Peyretaillade E."/>
            <person name="Brottier P."/>
            <person name="Wincker P."/>
            <person name="Delbac F."/>
            <person name="El Alaoui H."/>
            <person name="Peyret P."/>
            <person name="Saurin W."/>
            <person name="Gouy M."/>
            <person name="Weissenbach J."/>
            <person name="Vivares C.P."/>
        </authorList>
    </citation>
    <scope>NUCLEOTIDE SEQUENCE [LARGE SCALE GENOMIC DNA]</scope>
    <source>
        <strain>GB-M1</strain>
    </source>
</reference>
<reference key="2">
    <citation type="journal article" date="2006" name="Proteomics">
        <title>Proteomic analysis of the eukaryotic parasite Encephalitozoon cuniculi (microsporidia): a reference map for proteins expressed in late sporogonial stages.</title>
        <authorList>
            <person name="Brosson D."/>
            <person name="Kuhn L."/>
            <person name="Delbac F."/>
            <person name="Garin J."/>
            <person name="Vivares C.P."/>
            <person name="Texier C."/>
        </authorList>
    </citation>
    <scope>IDENTIFICATION BY MASS SPECTROMETRY [LARGE SCALE ANALYSIS]</scope>
    <scope>DEVELOPMENTAL STAGE</scope>
    <scope>SUBCELLULAR LOCATION</scope>
</reference>
<reference key="3">
    <citation type="submission" date="2012-02" db="PDB data bank">
        <title>Crystal structure of a nuclear GTP-binding protein from Encephalitozoon cuniculi bound to GDP-MG2+.</title>
        <authorList>
            <consortium name="Seattle structural genomics center for infectious disease (SSGCID)"/>
        </authorList>
    </citation>
    <scope>X-RAY CRYSTALLOGRAPHY (1.80 ANGSTROMS) IN COMPLEX WITH GDP</scope>
</reference>